<name>EZH2B_XENLA</name>
<comment type="function">
    <text evidence="2">Polycomb group (PcG) protein. Catalytic subunit of the prc2/eed-ezh2 complex, which methylates 'Lys-9' and 'Lys-27' of histone H3, leading to transcriptional repression of the affected target gene. May regulate the circadian clock via histone methylation at the promoter of the circadian genes.</text>
</comment>
<comment type="catalytic activity">
    <reaction evidence="1">
        <text>L-lysyl(27)-[histone H3] + 3 S-adenosyl-L-methionine = N(6),N(6),N(6)-trimethyl-L-lysyl(27)-[histone H3] + 3 S-adenosyl-L-homocysteine + 3 H(+)</text>
        <dbReference type="Rhea" id="RHEA:60292"/>
        <dbReference type="Rhea" id="RHEA-COMP:15535"/>
        <dbReference type="Rhea" id="RHEA-COMP:15548"/>
        <dbReference type="ChEBI" id="CHEBI:15378"/>
        <dbReference type="ChEBI" id="CHEBI:29969"/>
        <dbReference type="ChEBI" id="CHEBI:57856"/>
        <dbReference type="ChEBI" id="CHEBI:59789"/>
        <dbReference type="ChEBI" id="CHEBI:61961"/>
        <dbReference type="EC" id="2.1.1.356"/>
    </reaction>
</comment>
<comment type="subunit">
    <text evidence="1">Component of the prc2/eed-ezh2 complex.</text>
</comment>
<comment type="subcellular location">
    <subcellularLocation>
        <location evidence="1">Nucleus</location>
    </subcellularLocation>
</comment>
<comment type="similarity">
    <text evidence="3">Belongs to the class V-like SAM-binding methyltransferase superfamily. Histone-lysine methyltransferase family. EZ subfamily.</text>
</comment>
<dbReference type="EC" id="2.1.1.356" evidence="1"/>
<dbReference type="EMBL" id="BC097526">
    <property type="protein sequence ID" value="AAH97526.1"/>
    <property type="molecule type" value="mRNA"/>
</dbReference>
<dbReference type="RefSeq" id="NP_001167506.1">
    <property type="nucleotide sequence ID" value="NM_001174035.1"/>
</dbReference>
<dbReference type="SMR" id="Q4V863"/>
<dbReference type="DNASU" id="100381148"/>
<dbReference type="GeneID" id="100381148"/>
<dbReference type="KEGG" id="xla:100381148"/>
<dbReference type="AGR" id="Xenbase:XB-GENE-6252001"/>
<dbReference type="CTD" id="100381148"/>
<dbReference type="Xenbase" id="XB-GENE-6252001">
    <property type="gene designation" value="ezh2.S"/>
</dbReference>
<dbReference type="OrthoDB" id="6141102at2759"/>
<dbReference type="Proteomes" id="UP000186698">
    <property type="component" value="Chromosome 6S"/>
</dbReference>
<dbReference type="Bgee" id="100381148">
    <property type="expression patterns" value="Expressed in gastrula and 17 other cell types or tissues"/>
</dbReference>
<dbReference type="GO" id="GO:0035098">
    <property type="term" value="C:ESC/E(Z) complex"/>
    <property type="evidence" value="ECO:0000250"/>
    <property type="project" value="UniProtKB"/>
</dbReference>
<dbReference type="GO" id="GO:0005634">
    <property type="term" value="C:nucleus"/>
    <property type="evidence" value="ECO:0000318"/>
    <property type="project" value="GO_Central"/>
</dbReference>
<dbReference type="GO" id="GO:0003682">
    <property type="term" value="F:chromatin binding"/>
    <property type="evidence" value="ECO:0000318"/>
    <property type="project" value="GO_Central"/>
</dbReference>
<dbReference type="GO" id="GO:0046976">
    <property type="term" value="F:histone H3K27 methyltransferase activity"/>
    <property type="evidence" value="ECO:0000318"/>
    <property type="project" value="GO_Central"/>
</dbReference>
<dbReference type="GO" id="GO:0140951">
    <property type="term" value="F:histone H3K27 trimethyltransferase activity"/>
    <property type="evidence" value="ECO:0007669"/>
    <property type="project" value="UniProtKB-EC"/>
</dbReference>
<dbReference type="GO" id="GO:1990841">
    <property type="term" value="F:promoter-specific chromatin binding"/>
    <property type="evidence" value="ECO:0000250"/>
    <property type="project" value="UniProtKB"/>
</dbReference>
<dbReference type="GO" id="GO:0031507">
    <property type="term" value="P:heterochromatin formation"/>
    <property type="evidence" value="ECO:0000318"/>
    <property type="project" value="GO_Central"/>
</dbReference>
<dbReference type="GO" id="GO:0032259">
    <property type="term" value="P:methylation"/>
    <property type="evidence" value="ECO:0007669"/>
    <property type="project" value="UniProtKB-KW"/>
</dbReference>
<dbReference type="GO" id="GO:0045814">
    <property type="term" value="P:negative regulation of gene expression, epigenetic"/>
    <property type="evidence" value="ECO:0000250"/>
    <property type="project" value="UniProtKB"/>
</dbReference>
<dbReference type="GO" id="GO:0048511">
    <property type="term" value="P:rhythmic process"/>
    <property type="evidence" value="ECO:0007669"/>
    <property type="project" value="UniProtKB-KW"/>
</dbReference>
<dbReference type="CDD" id="cd19218">
    <property type="entry name" value="SET_EZH2"/>
    <property type="match status" value="1"/>
</dbReference>
<dbReference type="FunFam" id="2.170.270.10:FF:000001">
    <property type="entry name" value="Putative histone-lysine N-methyltransferase EZH2"/>
    <property type="match status" value="1"/>
</dbReference>
<dbReference type="Gene3D" id="2.170.270.10">
    <property type="entry name" value="SET domain"/>
    <property type="match status" value="1"/>
</dbReference>
<dbReference type="InterPro" id="IPR026489">
    <property type="entry name" value="CXC_dom"/>
</dbReference>
<dbReference type="InterPro" id="IPR045318">
    <property type="entry name" value="EZH1/2-like"/>
</dbReference>
<dbReference type="InterPro" id="IPR048358">
    <property type="entry name" value="EZH1/2_MCSS"/>
</dbReference>
<dbReference type="InterPro" id="IPR021654">
    <property type="entry name" value="EZH1/EZH2"/>
</dbReference>
<dbReference type="InterPro" id="IPR044439">
    <property type="entry name" value="EZH2_SET"/>
</dbReference>
<dbReference type="InterPro" id="IPR041343">
    <property type="entry name" value="PRC2_HTH_1"/>
</dbReference>
<dbReference type="InterPro" id="IPR041355">
    <property type="entry name" value="Pre-SET_CXC"/>
</dbReference>
<dbReference type="InterPro" id="IPR001005">
    <property type="entry name" value="SANT/Myb"/>
</dbReference>
<dbReference type="InterPro" id="IPR001214">
    <property type="entry name" value="SET_dom"/>
</dbReference>
<dbReference type="InterPro" id="IPR046341">
    <property type="entry name" value="SET_dom_sf"/>
</dbReference>
<dbReference type="InterPro" id="IPR033467">
    <property type="entry name" value="Tesmin/TSO1-like_CXC"/>
</dbReference>
<dbReference type="PANTHER" id="PTHR45747">
    <property type="entry name" value="HISTONE-LYSINE N-METHYLTRANSFERASE E(Z)"/>
    <property type="match status" value="1"/>
</dbReference>
<dbReference type="PANTHER" id="PTHR45747:SF3">
    <property type="entry name" value="HISTONE-LYSINE N-METHYLTRANSFERASE EZH2"/>
    <property type="match status" value="1"/>
</dbReference>
<dbReference type="Pfam" id="PF21358">
    <property type="entry name" value="Ezh2_MCSS"/>
    <property type="match status" value="1"/>
</dbReference>
<dbReference type="Pfam" id="PF11616">
    <property type="entry name" value="EZH2_WD-Binding"/>
    <property type="match status" value="1"/>
</dbReference>
<dbReference type="Pfam" id="PF18118">
    <property type="entry name" value="PRC2_HTH_1"/>
    <property type="match status" value="1"/>
</dbReference>
<dbReference type="Pfam" id="PF18264">
    <property type="entry name" value="preSET_CXC"/>
    <property type="match status" value="1"/>
</dbReference>
<dbReference type="Pfam" id="PF00856">
    <property type="entry name" value="SET"/>
    <property type="match status" value="1"/>
</dbReference>
<dbReference type="SMART" id="SM01114">
    <property type="entry name" value="CXC"/>
    <property type="match status" value="1"/>
</dbReference>
<dbReference type="SMART" id="SM00717">
    <property type="entry name" value="SANT"/>
    <property type="match status" value="2"/>
</dbReference>
<dbReference type="SMART" id="SM00317">
    <property type="entry name" value="SET"/>
    <property type="match status" value="1"/>
</dbReference>
<dbReference type="SUPFAM" id="SSF82199">
    <property type="entry name" value="SET domain"/>
    <property type="match status" value="1"/>
</dbReference>
<dbReference type="PROSITE" id="PS51633">
    <property type="entry name" value="CXC"/>
    <property type="match status" value="1"/>
</dbReference>
<dbReference type="PROSITE" id="PS50280">
    <property type="entry name" value="SET"/>
    <property type="match status" value="1"/>
</dbReference>
<gene>
    <name type="primary">ezh2-b</name>
</gene>
<proteinExistence type="evidence at transcript level"/>
<sequence>MGQTGKKSEKGAVCWRKRVKSEYMRLRQLKRFRRADEVKSMFNTNRQKIMERTEILNQEWKQRRIQPVHIMTTVSSLRGTRECFVTSDLDFPKQVIPLKTLTAVASMPIMYSWSPLQQNFMVEDETVLHNIPYMGDEVLDQDGTFIEELIKNYDGKVHGDRECGFINDEIFVELVNALAQYSDYEDDEDGEDNQDDERDDITKDQDDNMEEKETLPLRKFPSDKIFEAISSVFPDKGTSEELKEKYKELTEQQLPGALPPECTPNIDGSNAKSVQREQSLHSFHTLFCRRCFKYDCFLHPFHATPNTYKRKNNEAANDGKLCGPYCYQLLEGAREFAAALTAEIIKTPPKRPSGRRRGRLPNNSSRPSTPTVNVLEAKDTDSDREAGTETGGESNDKEEEEKKDETDSSSEANSRCQTPIKMKPNIEPPENVEWSGAEASLFRVLIGTYYDNFCAIARLISTKTCRQVYEFRVKESSIIAPVIAEDVDTPPRKKKRKHRLWAAHCRKIQLKKDGSSNHVYNYQPCDHPRQPCDSSCPCVIAQNFCEKFCQCSSDCQNRFPGCRCKAQCNTKQCPCYLAVRECDPDLCLTCGAADHWDSKNVSCKNCSIQRGSKKHLLLAPSDVAGWGIYIKDPVQKNEFISEYCGEIISQDEADRRGKVYDKYMCSFLFNLNNDFVVDATRKGNKIRFANHSLNPNCYAKVMMVNGDHRIGIFAKRAIQTGEELFFDYRYSQADALKYVGIEREMEIP</sequence>
<protein>
    <recommendedName>
        <fullName>Histone-lysine N-methyltransferase EZH2</fullName>
        <ecNumber evidence="1">2.1.1.356</ecNumber>
    </recommendedName>
    <alternativeName>
        <fullName>Enhancer of zeste homolog 2-B</fullName>
    </alternativeName>
</protein>
<evidence type="ECO:0000250" key="1">
    <source>
        <dbReference type="UniProtKB" id="Q15910"/>
    </source>
</evidence>
<evidence type="ECO:0000250" key="2">
    <source>
        <dbReference type="UniProtKB" id="Q61188"/>
    </source>
</evidence>
<evidence type="ECO:0000255" key="3">
    <source>
        <dbReference type="PROSITE-ProRule" id="PRU00190"/>
    </source>
</evidence>
<evidence type="ECO:0000255" key="4">
    <source>
        <dbReference type="PROSITE-ProRule" id="PRU00970"/>
    </source>
</evidence>
<evidence type="ECO:0000256" key="5">
    <source>
        <dbReference type="SAM" id="MobiDB-lite"/>
    </source>
</evidence>
<organism>
    <name type="scientific">Xenopus laevis</name>
    <name type="common">African clawed frog</name>
    <dbReference type="NCBI Taxonomy" id="8355"/>
    <lineage>
        <taxon>Eukaryota</taxon>
        <taxon>Metazoa</taxon>
        <taxon>Chordata</taxon>
        <taxon>Craniata</taxon>
        <taxon>Vertebrata</taxon>
        <taxon>Euteleostomi</taxon>
        <taxon>Amphibia</taxon>
        <taxon>Batrachia</taxon>
        <taxon>Anura</taxon>
        <taxon>Pipoidea</taxon>
        <taxon>Pipidae</taxon>
        <taxon>Xenopodinae</taxon>
        <taxon>Xenopus</taxon>
        <taxon>Xenopus</taxon>
    </lineage>
</organism>
<reference key="1">
    <citation type="submission" date="2005-06" db="EMBL/GenBank/DDBJ databases">
        <authorList>
            <consortium name="NIH - Xenopus Gene Collection (XGC) project"/>
        </authorList>
    </citation>
    <scope>NUCLEOTIDE SEQUENCE [LARGE SCALE MRNA]</scope>
    <source>
        <tissue>Embryo</tissue>
    </source>
</reference>
<keyword id="KW-0090">Biological rhythms</keyword>
<keyword id="KW-0156">Chromatin regulator</keyword>
<keyword id="KW-0489">Methyltransferase</keyword>
<keyword id="KW-0539">Nucleus</keyword>
<keyword id="KW-1185">Reference proteome</keyword>
<keyword id="KW-0678">Repressor</keyword>
<keyword id="KW-0949">S-adenosyl-L-methionine</keyword>
<keyword id="KW-0804">Transcription</keyword>
<keyword id="KW-0805">Transcription regulation</keyword>
<keyword id="KW-0808">Transferase</keyword>
<feature type="chain" id="PRO_0000345429" description="Histone-lysine N-methyltransferase EZH2">
    <location>
        <begin position="1"/>
        <end position="748"/>
    </location>
</feature>
<feature type="domain" description="CXC" evidence="4">
    <location>
        <begin position="505"/>
        <end position="607"/>
    </location>
</feature>
<feature type="domain" description="SET" evidence="3">
    <location>
        <begin position="614"/>
        <end position="729"/>
    </location>
</feature>
<feature type="region of interest" description="Disordered" evidence="5">
    <location>
        <begin position="183"/>
        <end position="215"/>
    </location>
</feature>
<feature type="region of interest" description="Disordered" evidence="5">
    <location>
        <begin position="347"/>
        <end position="428"/>
    </location>
</feature>
<feature type="compositionally biased region" description="Acidic residues" evidence="5">
    <location>
        <begin position="183"/>
        <end position="199"/>
    </location>
</feature>
<feature type="compositionally biased region" description="Basic and acidic residues" evidence="5">
    <location>
        <begin position="200"/>
        <end position="215"/>
    </location>
</feature>
<feature type="compositionally biased region" description="Basic residues" evidence="5">
    <location>
        <begin position="348"/>
        <end position="359"/>
    </location>
</feature>
<feature type="compositionally biased region" description="Basic and acidic residues" evidence="5">
    <location>
        <begin position="376"/>
        <end position="387"/>
    </location>
</feature>
<accession>Q4V863</accession>